<name>RL25_HISS1</name>
<keyword id="KW-0687">Ribonucleoprotein</keyword>
<keyword id="KW-0689">Ribosomal protein</keyword>
<keyword id="KW-0694">RNA-binding</keyword>
<keyword id="KW-0699">rRNA-binding</keyword>
<accession>Q0I3J3</accession>
<sequence length="95" mass="10739">MSFKFNAEVRSKQGKGASRRLRHNGQIPAIVYGGSEAPVSIVLNHDELNNAQIHDSFYSDTIILVIEGKEISVKVQAMQRHPFKPKLVHIDFKRV</sequence>
<reference key="1">
    <citation type="journal article" date="2007" name="J. Bacteriol.">
        <title>Complete genome sequence of Haemophilus somnus (Histophilus somni) strain 129Pt and comparison to Haemophilus ducreyi 35000HP and Haemophilus influenzae Rd.</title>
        <authorList>
            <person name="Challacombe J.F."/>
            <person name="Duncan A.J."/>
            <person name="Brettin T.S."/>
            <person name="Bruce D."/>
            <person name="Chertkov O."/>
            <person name="Detter J.C."/>
            <person name="Han C.S."/>
            <person name="Misra M."/>
            <person name="Richardson P."/>
            <person name="Tapia R."/>
            <person name="Thayer N."/>
            <person name="Xie G."/>
            <person name="Inzana T.J."/>
        </authorList>
    </citation>
    <scope>NUCLEOTIDE SEQUENCE [LARGE SCALE GENOMIC DNA]</scope>
    <source>
        <strain>129Pt</strain>
    </source>
</reference>
<organism>
    <name type="scientific">Histophilus somni (strain 129Pt)</name>
    <name type="common">Haemophilus somnus</name>
    <dbReference type="NCBI Taxonomy" id="205914"/>
    <lineage>
        <taxon>Bacteria</taxon>
        <taxon>Pseudomonadati</taxon>
        <taxon>Pseudomonadota</taxon>
        <taxon>Gammaproteobacteria</taxon>
        <taxon>Pasteurellales</taxon>
        <taxon>Pasteurellaceae</taxon>
        <taxon>Histophilus</taxon>
    </lineage>
</organism>
<proteinExistence type="inferred from homology"/>
<comment type="function">
    <text evidence="1">This is one of the proteins that binds to the 5S RNA in the ribosome where it forms part of the central protuberance.</text>
</comment>
<comment type="subunit">
    <text evidence="1">Part of the 50S ribosomal subunit; part of the 5S rRNA/L5/L18/L25 subcomplex. Contacts the 5S rRNA. Binds to the 5S rRNA independently of L5 and L18.</text>
</comment>
<comment type="similarity">
    <text evidence="1">Belongs to the bacterial ribosomal protein bL25 family.</text>
</comment>
<dbReference type="EMBL" id="CP000436">
    <property type="protein sequence ID" value="ABI25148.1"/>
    <property type="molecule type" value="Genomic_DNA"/>
</dbReference>
<dbReference type="SMR" id="Q0I3J3"/>
<dbReference type="KEGG" id="hso:HS_0873"/>
<dbReference type="eggNOG" id="COG1825">
    <property type="taxonomic scope" value="Bacteria"/>
</dbReference>
<dbReference type="HOGENOM" id="CLU_137946_0_0_6"/>
<dbReference type="GO" id="GO:0022625">
    <property type="term" value="C:cytosolic large ribosomal subunit"/>
    <property type="evidence" value="ECO:0007669"/>
    <property type="project" value="TreeGrafter"/>
</dbReference>
<dbReference type="GO" id="GO:0008097">
    <property type="term" value="F:5S rRNA binding"/>
    <property type="evidence" value="ECO:0007669"/>
    <property type="project" value="InterPro"/>
</dbReference>
<dbReference type="GO" id="GO:0003735">
    <property type="term" value="F:structural constituent of ribosome"/>
    <property type="evidence" value="ECO:0007669"/>
    <property type="project" value="InterPro"/>
</dbReference>
<dbReference type="GO" id="GO:0006412">
    <property type="term" value="P:translation"/>
    <property type="evidence" value="ECO:0007669"/>
    <property type="project" value="UniProtKB-UniRule"/>
</dbReference>
<dbReference type="CDD" id="cd00495">
    <property type="entry name" value="Ribosomal_L25_TL5_CTC"/>
    <property type="match status" value="1"/>
</dbReference>
<dbReference type="FunFam" id="2.40.240.10:FF:000002">
    <property type="entry name" value="50S ribosomal protein L25"/>
    <property type="match status" value="1"/>
</dbReference>
<dbReference type="Gene3D" id="2.40.240.10">
    <property type="entry name" value="Ribosomal Protein L25, Chain P"/>
    <property type="match status" value="1"/>
</dbReference>
<dbReference type="HAMAP" id="MF_01336">
    <property type="entry name" value="Ribosomal_bL25"/>
    <property type="match status" value="1"/>
</dbReference>
<dbReference type="InterPro" id="IPR020056">
    <property type="entry name" value="Rbsml_bL25/Gln-tRNA_synth_N"/>
</dbReference>
<dbReference type="InterPro" id="IPR011035">
    <property type="entry name" value="Ribosomal_bL25/Gln-tRNA_synth"/>
</dbReference>
<dbReference type="InterPro" id="IPR020055">
    <property type="entry name" value="Ribosomal_bL25_short"/>
</dbReference>
<dbReference type="InterPro" id="IPR029751">
    <property type="entry name" value="Ribosomal_L25_dom"/>
</dbReference>
<dbReference type="InterPro" id="IPR020930">
    <property type="entry name" value="Ribosomal_uL5_bac-type"/>
</dbReference>
<dbReference type="NCBIfam" id="NF004612">
    <property type="entry name" value="PRK05943.1"/>
    <property type="match status" value="1"/>
</dbReference>
<dbReference type="PANTHER" id="PTHR33284">
    <property type="entry name" value="RIBOSOMAL PROTEIN L25/GLN-TRNA SYNTHETASE, ANTI-CODON-BINDING DOMAIN-CONTAINING PROTEIN"/>
    <property type="match status" value="1"/>
</dbReference>
<dbReference type="PANTHER" id="PTHR33284:SF1">
    <property type="entry name" value="RIBOSOMAL PROTEIN L25_GLN-TRNA SYNTHETASE, ANTI-CODON-BINDING DOMAIN-CONTAINING PROTEIN"/>
    <property type="match status" value="1"/>
</dbReference>
<dbReference type="Pfam" id="PF01386">
    <property type="entry name" value="Ribosomal_L25p"/>
    <property type="match status" value="1"/>
</dbReference>
<dbReference type="SUPFAM" id="SSF50715">
    <property type="entry name" value="Ribosomal protein L25-like"/>
    <property type="match status" value="1"/>
</dbReference>
<gene>
    <name evidence="1" type="primary">rplY</name>
    <name type="ordered locus">HS_0873</name>
</gene>
<protein>
    <recommendedName>
        <fullName evidence="1">Large ribosomal subunit protein bL25</fullName>
    </recommendedName>
    <alternativeName>
        <fullName evidence="3">50S ribosomal protein L25</fullName>
    </alternativeName>
</protein>
<feature type="chain" id="PRO_1000052959" description="Large ribosomal subunit protein bL25">
    <location>
        <begin position="1"/>
        <end position="95"/>
    </location>
</feature>
<feature type="region of interest" description="Disordered" evidence="2">
    <location>
        <begin position="1"/>
        <end position="20"/>
    </location>
</feature>
<evidence type="ECO:0000255" key="1">
    <source>
        <dbReference type="HAMAP-Rule" id="MF_01336"/>
    </source>
</evidence>
<evidence type="ECO:0000256" key="2">
    <source>
        <dbReference type="SAM" id="MobiDB-lite"/>
    </source>
</evidence>
<evidence type="ECO:0000305" key="3"/>